<feature type="chain" id="PRO_1000053430" description="Phosphatidylglycerol--prolipoprotein diacylglyceryl transferase">
    <location>
        <begin position="1"/>
        <end position="409"/>
    </location>
</feature>
<feature type="transmembrane region" description="Helical" evidence="1">
    <location>
        <begin position="18"/>
        <end position="38"/>
    </location>
</feature>
<feature type="transmembrane region" description="Helical" evidence="1">
    <location>
        <begin position="48"/>
        <end position="68"/>
    </location>
</feature>
<feature type="transmembrane region" description="Helical" evidence="1">
    <location>
        <begin position="93"/>
        <end position="113"/>
    </location>
</feature>
<feature type="transmembrane region" description="Helical" evidence="1">
    <location>
        <begin position="119"/>
        <end position="139"/>
    </location>
</feature>
<feature type="transmembrane region" description="Helical" evidence="1">
    <location>
        <begin position="177"/>
        <end position="197"/>
    </location>
</feature>
<feature type="transmembrane region" description="Helical" evidence="1">
    <location>
        <begin position="234"/>
        <end position="254"/>
    </location>
</feature>
<feature type="region of interest" description="Disordered" evidence="2">
    <location>
        <begin position="273"/>
        <end position="409"/>
    </location>
</feature>
<feature type="compositionally biased region" description="Low complexity" evidence="2">
    <location>
        <begin position="297"/>
        <end position="309"/>
    </location>
</feature>
<feature type="compositionally biased region" description="Low complexity" evidence="2">
    <location>
        <begin position="320"/>
        <end position="335"/>
    </location>
</feature>
<feature type="compositionally biased region" description="Low complexity" evidence="2">
    <location>
        <begin position="348"/>
        <end position="375"/>
    </location>
</feature>
<feature type="binding site" evidence="1">
    <location>
        <position position="141"/>
    </location>
    <ligand>
        <name>a 1,2-diacyl-sn-glycero-3-phospho-(1'-sn-glycerol)</name>
        <dbReference type="ChEBI" id="CHEBI:64716"/>
    </ligand>
</feature>
<dbReference type="EC" id="2.5.1.145" evidence="1"/>
<dbReference type="EMBL" id="CP000249">
    <property type="protein sequence ID" value="ABD12371.1"/>
    <property type="molecule type" value="Genomic_DNA"/>
</dbReference>
<dbReference type="RefSeq" id="WP_011437399.1">
    <property type="nucleotide sequence ID" value="NZ_JENI01000035.1"/>
</dbReference>
<dbReference type="SMR" id="Q2J8M1"/>
<dbReference type="STRING" id="106370.Francci3_3014"/>
<dbReference type="KEGG" id="fra:Francci3_3014"/>
<dbReference type="eggNOG" id="COG0682">
    <property type="taxonomic scope" value="Bacteria"/>
</dbReference>
<dbReference type="HOGENOM" id="CLU_013386_2_2_11"/>
<dbReference type="OrthoDB" id="871140at2"/>
<dbReference type="PhylomeDB" id="Q2J8M1"/>
<dbReference type="UniPathway" id="UPA00664"/>
<dbReference type="Proteomes" id="UP000001937">
    <property type="component" value="Chromosome"/>
</dbReference>
<dbReference type="GO" id="GO:0005886">
    <property type="term" value="C:plasma membrane"/>
    <property type="evidence" value="ECO:0007669"/>
    <property type="project" value="UniProtKB-SubCell"/>
</dbReference>
<dbReference type="GO" id="GO:0008961">
    <property type="term" value="F:phosphatidylglycerol-prolipoprotein diacylglyceryl transferase activity"/>
    <property type="evidence" value="ECO:0007669"/>
    <property type="project" value="UniProtKB-UniRule"/>
</dbReference>
<dbReference type="GO" id="GO:0042158">
    <property type="term" value="P:lipoprotein biosynthetic process"/>
    <property type="evidence" value="ECO:0007669"/>
    <property type="project" value="UniProtKB-UniRule"/>
</dbReference>
<dbReference type="HAMAP" id="MF_01147">
    <property type="entry name" value="Lgt"/>
    <property type="match status" value="1"/>
</dbReference>
<dbReference type="InterPro" id="IPR001640">
    <property type="entry name" value="Lgt"/>
</dbReference>
<dbReference type="NCBIfam" id="TIGR00544">
    <property type="entry name" value="lgt"/>
    <property type="match status" value="1"/>
</dbReference>
<dbReference type="PANTHER" id="PTHR30589:SF0">
    <property type="entry name" value="PHOSPHATIDYLGLYCEROL--PROLIPOPROTEIN DIACYLGLYCERYL TRANSFERASE"/>
    <property type="match status" value="1"/>
</dbReference>
<dbReference type="PANTHER" id="PTHR30589">
    <property type="entry name" value="PROLIPOPROTEIN DIACYLGLYCERYL TRANSFERASE"/>
    <property type="match status" value="1"/>
</dbReference>
<dbReference type="Pfam" id="PF01790">
    <property type="entry name" value="LGT"/>
    <property type="match status" value="1"/>
</dbReference>
<dbReference type="PROSITE" id="PS01311">
    <property type="entry name" value="LGT"/>
    <property type="match status" value="1"/>
</dbReference>
<evidence type="ECO:0000255" key="1">
    <source>
        <dbReference type="HAMAP-Rule" id="MF_01147"/>
    </source>
</evidence>
<evidence type="ECO:0000256" key="2">
    <source>
        <dbReference type="SAM" id="MobiDB-lite"/>
    </source>
</evidence>
<gene>
    <name evidence="1" type="primary">lgt</name>
    <name type="ordered locus">Francci3_3014</name>
</gene>
<proteinExistence type="inferred from homology"/>
<organism>
    <name type="scientific">Frankia casuarinae (strain DSM 45818 / CECT 9043 / HFP020203 / CcI3)</name>
    <dbReference type="NCBI Taxonomy" id="106370"/>
    <lineage>
        <taxon>Bacteria</taxon>
        <taxon>Bacillati</taxon>
        <taxon>Actinomycetota</taxon>
        <taxon>Actinomycetes</taxon>
        <taxon>Frankiales</taxon>
        <taxon>Frankiaceae</taxon>
        <taxon>Frankia</taxon>
    </lineage>
</organism>
<accession>Q2J8M1</accession>
<protein>
    <recommendedName>
        <fullName evidence="1">Phosphatidylglycerol--prolipoprotein diacylglyceryl transferase</fullName>
        <ecNumber evidence="1">2.5.1.145</ecNumber>
    </recommendedName>
</protein>
<reference key="1">
    <citation type="journal article" date="2007" name="Genome Res.">
        <title>Genome characteristics of facultatively symbiotic Frankia sp. strains reflect host range and host plant biogeography.</title>
        <authorList>
            <person name="Normand P."/>
            <person name="Lapierre P."/>
            <person name="Tisa L.S."/>
            <person name="Gogarten J.P."/>
            <person name="Alloisio N."/>
            <person name="Bagnarol E."/>
            <person name="Bassi C.A."/>
            <person name="Berry A.M."/>
            <person name="Bickhart D.M."/>
            <person name="Choisne N."/>
            <person name="Couloux A."/>
            <person name="Cournoyer B."/>
            <person name="Cruveiller S."/>
            <person name="Daubin V."/>
            <person name="Demange N."/>
            <person name="Francino M.P."/>
            <person name="Goltsman E."/>
            <person name="Huang Y."/>
            <person name="Kopp O.R."/>
            <person name="Labarre L."/>
            <person name="Lapidus A."/>
            <person name="Lavire C."/>
            <person name="Marechal J."/>
            <person name="Martinez M."/>
            <person name="Mastronunzio J.E."/>
            <person name="Mullin B.C."/>
            <person name="Niemann J."/>
            <person name="Pujic P."/>
            <person name="Rawnsley T."/>
            <person name="Rouy Z."/>
            <person name="Schenowitz C."/>
            <person name="Sellstedt A."/>
            <person name="Tavares F."/>
            <person name="Tomkins J.P."/>
            <person name="Vallenet D."/>
            <person name="Valverde C."/>
            <person name="Wall L.G."/>
            <person name="Wang Y."/>
            <person name="Medigue C."/>
            <person name="Benson D.R."/>
        </authorList>
    </citation>
    <scope>NUCLEOTIDE SEQUENCE [LARGE SCALE GENOMIC DNA]</scope>
    <source>
        <strain>DSM 45818 / CECT 9043 / HFP020203 / CcI3</strain>
    </source>
</reference>
<name>LGT_FRACC</name>
<sequence>MVLAAIPSPSRGVVHLGPVPLRAYALMIIIGVFVAVFVTGRRLRARGMDPMVASEVAYWAVPFGIVGARVYHVVSTPAAYFGRDGNVLDVIKIWNGGLGIWGAIAGGAFGAWLATRRYGISLALFGDAAAPGIILAQAIGRWGNWFNQELYGKASTLPWAVRIDEKHQIIPGVSTYQPTFLYECLWNLVVAGILLVVDRRHRLGRGKLFCLYVALYTFGRLWIEMLRIDTANQILGLRVNIWTSIVVCLGALLALAVTRSPVDPNLSREEQEALGIARSRPAARSTVTTAGTADQRAAAPDSAGPDSAALDSVGPDSVDPDLGGPDPADPGSAGSVPAAAVPDASGSTATTATTATTATTATTATTATTATTATTGVPAGSQQSRGLATRLPASGGHTSAVPPEEPQLP</sequence>
<keyword id="KW-1003">Cell membrane</keyword>
<keyword id="KW-0472">Membrane</keyword>
<keyword id="KW-1185">Reference proteome</keyword>
<keyword id="KW-0808">Transferase</keyword>
<keyword id="KW-0812">Transmembrane</keyword>
<keyword id="KW-1133">Transmembrane helix</keyword>
<comment type="function">
    <text evidence="1">Catalyzes the transfer of the diacylglyceryl group from phosphatidylglycerol to the sulfhydryl group of the N-terminal cysteine of a prolipoprotein, the first step in the formation of mature lipoproteins.</text>
</comment>
<comment type="catalytic activity">
    <reaction evidence="1">
        <text>L-cysteinyl-[prolipoprotein] + a 1,2-diacyl-sn-glycero-3-phospho-(1'-sn-glycerol) = an S-1,2-diacyl-sn-glyceryl-L-cysteinyl-[prolipoprotein] + sn-glycerol 1-phosphate + H(+)</text>
        <dbReference type="Rhea" id="RHEA:56712"/>
        <dbReference type="Rhea" id="RHEA-COMP:14679"/>
        <dbReference type="Rhea" id="RHEA-COMP:14680"/>
        <dbReference type="ChEBI" id="CHEBI:15378"/>
        <dbReference type="ChEBI" id="CHEBI:29950"/>
        <dbReference type="ChEBI" id="CHEBI:57685"/>
        <dbReference type="ChEBI" id="CHEBI:64716"/>
        <dbReference type="ChEBI" id="CHEBI:140658"/>
        <dbReference type="EC" id="2.5.1.145"/>
    </reaction>
</comment>
<comment type="pathway">
    <text evidence="1">Protein modification; lipoprotein biosynthesis (diacylglyceryl transfer).</text>
</comment>
<comment type="subcellular location">
    <subcellularLocation>
        <location evidence="1">Cell membrane</location>
        <topology evidence="1">Multi-pass membrane protein</topology>
    </subcellularLocation>
</comment>
<comment type="similarity">
    <text evidence="1">Belongs to the Lgt family.</text>
</comment>